<name>OMPX_CHLPN</name>
<organism>
    <name type="scientific">Chlamydia pneumoniae</name>
    <name type="common">Chlamydophila pneumoniae</name>
    <dbReference type="NCBI Taxonomy" id="83558"/>
    <lineage>
        <taxon>Bacteria</taxon>
        <taxon>Pseudomonadati</taxon>
        <taxon>Chlamydiota</taxon>
        <taxon>Chlamydiia</taxon>
        <taxon>Chlamydiales</taxon>
        <taxon>Chlamydiaceae</taxon>
        <taxon>Chlamydia/Chlamydophila group</taxon>
        <taxon>Chlamydia</taxon>
    </lineage>
</organism>
<reference key="1">
    <citation type="journal article" date="1999" name="Nat. Genet.">
        <title>Comparative genomes of Chlamydia pneumoniae and C. trachomatis.</title>
        <authorList>
            <person name="Kalman S."/>
            <person name="Mitchell W.P."/>
            <person name="Marathe R."/>
            <person name="Lammel C.J."/>
            <person name="Fan J."/>
            <person name="Hyman R.W."/>
            <person name="Olinger L."/>
            <person name="Grimwood J."/>
            <person name="Davis R.W."/>
            <person name="Stephens R.S."/>
        </authorList>
    </citation>
    <scope>NUCLEOTIDE SEQUENCE [LARGE SCALE GENOMIC DNA]</scope>
    <source>
        <strain>CWL029</strain>
    </source>
</reference>
<reference key="2">
    <citation type="journal article" date="2000" name="Nucleic Acids Res.">
        <title>Genome sequences of Chlamydia trachomatis MoPn and Chlamydia pneumoniae AR39.</title>
        <authorList>
            <person name="Read T.D."/>
            <person name="Brunham R.C."/>
            <person name="Shen C."/>
            <person name="Gill S.R."/>
            <person name="Heidelberg J.F."/>
            <person name="White O."/>
            <person name="Hickey E.K."/>
            <person name="Peterson J.D."/>
            <person name="Utterback T.R."/>
            <person name="Berry K.J."/>
            <person name="Bass S."/>
            <person name="Linher K.D."/>
            <person name="Weidman J.F."/>
            <person name="Khouri H.M."/>
            <person name="Craven B."/>
            <person name="Bowman C."/>
            <person name="Dodson R.J."/>
            <person name="Gwinn M.L."/>
            <person name="Nelson W.C."/>
            <person name="DeBoy R.T."/>
            <person name="Kolonay J.F."/>
            <person name="McClarty G."/>
            <person name="Salzberg S.L."/>
            <person name="Eisen J.A."/>
            <person name="Fraser C.M."/>
        </authorList>
    </citation>
    <scope>NUCLEOTIDE SEQUENCE [LARGE SCALE GENOMIC DNA]</scope>
    <source>
        <strain>AR39</strain>
    </source>
</reference>
<reference key="3">
    <citation type="journal article" date="2000" name="Nucleic Acids Res.">
        <title>Comparison of whole genome sequences of Chlamydia pneumoniae J138 from Japan and CWL029 from USA.</title>
        <authorList>
            <person name="Shirai M."/>
            <person name="Hirakawa H."/>
            <person name="Kimoto M."/>
            <person name="Tabuchi M."/>
            <person name="Kishi F."/>
            <person name="Ouchi K."/>
            <person name="Shiba T."/>
            <person name="Ishii K."/>
            <person name="Hattori M."/>
            <person name="Kuhara S."/>
            <person name="Nakazawa T."/>
        </authorList>
    </citation>
    <scope>NUCLEOTIDE SEQUENCE [LARGE SCALE GENOMIC DNA]</scope>
    <source>
        <strain>J138</strain>
    </source>
</reference>
<reference key="4">
    <citation type="submission" date="2002-05" db="EMBL/GenBank/DDBJ databases">
        <title>The genome sequence of Chlamydia pneumoniae TW183 and comparison with other Chlamydia strains based on whole genome sequence analysis.</title>
        <authorList>
            <person name="Geng M.M."/>
            <person name="Schuhmacher A."/>
            <person name="Muehldorfer I."/>
            <person name="Bensch K.W."/>
            <person name="Schaefer K.P."/>
            <person name="Schneider S."/>
            <person name="Pohl T."/>
            <person name="Essig A."/>
            <person name="Marre R."/>
            <person name="Melchers K."/>
        </authorList>
    </citation>
    <scope>NUCLEOTIDE SEQUENCE [LARGE SCALE GENOMIC DNA]</scope>
    <source>
        <strain>TW-183</strain>
    </source>
</reference>
<evidence type="ECO:0000255" key="1"/>
<evidence type="ECO:0000305" key="2"/>
<accession>Q9Z788</accession>
<sequence>MKRQKRKQSITLIEMMVVITLIGIIGGALAFNMRGSIHKGKVFQSEQNCAKVYDILMMEYATGGSSLKEIIAHKETVVEEASWCKEGRKLLKDAWGEDLIVQLNDKGDDLVIFSKRVQSSNKK</sequence>
<feature type="signal peptide" evidence="1">
    <location>
        <begin position="1"/>
        <end position="30"/>
    </location>
</feature>
<feature type="chain" id="PRO_0000020158" description="Putative outer membrane protein CPn_0818/CP_1053/CPj0818/CpB0847">
    <location>
        <begin position="31"/>
        <end position="123"/>
    </location>
</feature>
<protein>
    <recommendedName>
        <fullName>Putative outer membrane protein CPn_0818/CP_1053/CPj0818/CpB0847</fullName>
    </recommendedName>
</protein>
<proteinExistence type="inferred from homology"/>
<comment type="subcellular location">
    <subcellularLocation>
        <location evidence="2">Cell outer membrane</location>
        <topology evidence="2">Peripheral membrane protein</topology>
    </subcellularLocation>
</comment>
<dbReference type="EMBL" id="AE001363">
    <property type="protein sequence ID" value="AAD18956.1"/>
    <property type="molecule type" value="Genomic_DNA"/>
</dbReference>
<dbReference type="EMBL" id="AE002161">
    <property type="protein sequence ID" value="AAF38826.1"/>
    <property type="molecule type" value="Genomic_DNA"/>
</dbReference>
<dbReference type="EMBL" id="BA000008">
    <property type="protein sequence ID" value="BAA99026.1"/>
    <property type="molecule type" value="Genomic_DNA"/>
</dbReference>
<dbReference type="EMBL" id="AE009440">
    <property type="protein sequence ID" value="AAP98776.1"/>
    <property type="molecule type" value="Genomic_DNA"/>
</dbReference>
<dbReference type="PIR" id="G72032">
    <property type="entry name" value="G72032"/>
</dbReference>
<dbReference type="PIR" id="H86592">
    <property type="entry name" value="H86592"/>
</dbReference>
<dbReference type="RefSeq" id="NP_225013.1">
    <property type="nucleotide sequence ID" value="NC_000922.1"/>
</dbReference>
<dbReference type="RefSeq" id="WP_010883455.1">
    <property type="nucleotide sequence ID" value="NZ_LN847257.1"/>
</dbReference>
<dbReference type="SMR" id="Q9Z788"/>
<dbReference type="STRING" id="406984.CPK_ORF00226"/>
<dbReference type="GeneID" id="45050873"/>
<dbReference type="KEGG" id="cpa:CP_1053"/>
<dbReference type="KEGG" id="cpj:CPj0818"/>
<dbReference type="KEGG" id="cpn:CPn_0818"/>
<dbReference type="KEGG" id="cpt:CpB0847"/>
<dbReference type="PATRIC" id="fig|115713.3.peg.897"/>
<dbReference type="eggNOG" id="COG2165">
    <property type="taxonomic scope" value="Bacteria"/>
</dbReference>
<dbReference type="HOGENOM" id="CLU_156557_0_0_0"/>
<dbReference type="OrthoDB" id="18791at2"/>
<dbReference type="Proteomes" id="UP000000583">
    <property type="component" value="Chromosome"/>
</dbReference>
<dbReference type="Proteomes" id="UP000000801">
    <property type="component" value="Chromosome"/>
</dbReference>
<dbReference type="GO" id="GO:0009279">
    <property type="term" value="C:cell outer membrane"/>
    <property type="evidence" value="ECO:0007669"/>
    <property type="project" value="UniProtKB-SubCell"/>
</dbReference>
<dbReference type="Gene3D" id="3.30.700.10">
    <property type="entry name" value="Glycoprotein, Type 4 Pilin"/>
    <property type="match status" value="1"/>
</dbReference>
<dbReference type="InterPro" id="IPR012902">
    <property type="entry name" value="N_methyl_site"/>
</dbReference>
<dbReference type="InterPro" id="IPR045584">
    <property type="entry name" value="Pilin-like"/>
</dbReference>
<dbReference type="NCBIfam" id="TIGR02532">
    <property type="entry name" value="IV_pilin_GFxxxE"/>
    <property type="match status" value="1"/>
</dbReference>
<dbReference type="Pfam" id="PF07963">
    <property type="entry name" value="N_methyl"/>
    <property type="match status" value="1"/>
</dbReference>
<dbReference type="SUPFAM" id="SSF54523">
    <property type="entry name" value="Pili subunits"/>
    <property type="match status" value="1"/>
</dbReference>
<gene>
    <name type="ordered locus">CPn_0818</name>
    <name type="ordered locus">CP_1053</name>
    <name type="ordered locus">CPj0818</name>
    <name type="ordered locus">CpB0847</name>
</gene>
<keyword id="KW-0998">Cell outer membrane</keyword>
<keyword id="KW-0472">Membrane</keyword>
<keyword id="KW-0732">Signal</keyword>